<feature type="transit peptide" description="Mitochondrion" evidence="1">
    <location>
        <begin position="1"/>
        <end position="17"/>
    </location>
</feature>
<feature type="chain" id="PRO_0000174923" description="10 kDa chaperonin, mitochondrial">
    <location>
        <begin position="18"/>
        <end position="98"/>
    </location>
</feature>
<feature type="region of interest" description="Cpn-10 domain" evidence="3">
    <location>
        <begin position="18"/>
        <end position="94"/>
    </location>
</feature>
<reference key="1">
    <citation type="journal article" date="1993" name="Plant Physiol.">
        <title>cDNA encoding a putative 10-kilodalton chaperonin from Arabidopsis thaliana.</title>
        <authorList>
            <person name="Grellet F."/>
            <person name="Raynal M."/>
            <person name="Laudie M."/>
            <person name="Cooke R."/>
            <person name="Giraudat J."/>
            <person name="Delseny M."/>
        </authorList>
    </citation>
    <scope>NUCLEOTIDE SEQUENCE [MRNA]</scope>
    <source>
        <strain>cv. Columbia</strain>
    </source>
</reference>
<reference key="2">
    <citation type="journal article" date="1996" name="Plant J.">
        <title>Isolation and characterization of a cDNA encoding mitochondrial chaperonin 10 from Arabidopsis thaliana by functional complementation of an Escherichia coli groES mutant.</title>
        <authorList>
            <person name="Koumoto Y."/>
            <person name="Tsugeki R."/>
            <person name="Shimada T."/>
            <person name="Mori H."/>
            <person name="Kondo M."/>
            <person name="Hara-Nishimura I."/>
            <person name="Nishimura M."/>
        </authorList>
    </citation>
    <scope>NUCLEOTIDE SEQUENCE [MRNA]</scope>
    <scope>FUNCTION</scope>
    <scope>SUBUNIT</scope>
    <scope>SUBCELLULAR LOCATION</scope>
    <scope>INDUCTION BY HEAT SHOCK</scope>
    <source>
        <strain>cv. Landsberg erecta</strain>
        <tissue>Seedling</tissue>
    </source>
</reference>
<reference key="3">
    <citation type="journal article" date="2000" name="Nature">
        <title>Sequence and analysis of chromosome 1 of the plant Arabidopsis thaliana.</title>
        <authorList>
            <person name="Theologis A."/>
            <person name="Ecker J.R."/>
            <person name="Palm C.J."/>
            <person name="Federspiel N.A."/>
            <person name="Kaul S."/>
            <person name="White O."/>
            <person name="Alonso J."/>
            <person name="Altafi H."/>
            <person name="Araujo R."/>
            <person name="Bowman C.L."/>
            <person name="Brooks S.Y."/>
            <person name="Buehler E."/>
            <person name="Chan A."/>
            <person name="Chao Q."/>
            <person name="Chen H."/>
            <person name="Cheuk R.F."/>
            <person name="Chin C.W."/>
            <person name="Chung M.K."/>
            <person name="Conn L."/>
            <person name="Conway A.B."/>
            <person name="Conway A.R."/>
            <person name="Creasy T.H."/>
            <person name="Dewar K."/>
            <person name="Dunn P."/>
            <person name="Etgu P."/>
            <person name="Feldblyum T.V."/>
            <person name="Feng J.-D."/>
            <person name="Fong B."/>
            <person name="Fujii C.Y."/>
            <person name="Gill J.E."/>
            <person name="Goldsmith A.D."/>
            <person name="Haas B."/>
            <person name="Hansen N.F."/>
            <person name="Hughes B."/>
            <person name="Huizar L."/>
            <person name="Hunter J.L."/>
            <person name="Jenkins J."/>
            <person name="Johnson-Hopson C."/>
            <person name="Khan S."/>
            <person name="Khaykin E."/>
            <person name="Kim C.J."/>
            <person name="Koo H.L."/>
            <person name="Kremenetskaia I."/>
            <person name="Kurtz D.B."/>
            <person name="Kwan A."/>
            <person name="Lam B."/>
            <person name="Langin-Hooper S."/>
            <person name="Lee A."/>
            <person name="Lee J.M."/>
            <person name="Lenz C.A."/>
            <person name="Li J.H."/>
            <person name="Li Y.-P."/>
            <person name="Lin X."/>
            <person name="Liu S.X."/>
            <person name="Liu Z.A."/>
            <person name="Luros J.S."/>
            <person name="Maiti R."/>
            <person name="Marziali A."/>
            <person name="Militscher J."/>
            <person name="Miranda M."/>
            <person name="Nguyen M."/>
            <person name="Nierman W.C."/>
            <person name="Osborne B.I."/>
            <person name="Pai G."/>
            <person name="Peterson J."/>
            <person name="Pham P.K."/>
            <person name="Rizzo M."/>
            <person name="Rooney T."/>
            <person name="Rowley D."/>
            <person name="Sakano H."/>
            <person name="Salzberg S.L."/>
            <person name="Schwartz J.R."/>
            <person name="Shinn P."/>
            <person name="Southwick A.M."/>
            <person name="Sun H."/>
            <person name="Tallon L.J."/>
            <person name="Tambunga G."/>
            <person name="Toriumi M.J."/>
            <person name="Town C.D."/>
            <person name="Utterback T."/>
            <person name="Van Aken S."/>
            <person name="Vaysberg M."/>
            <person name="Vysotskaia V.S."/>
            <person name="Walker M."/>
            <person name="Wu D."/>
            <person name="Yu G."/>
            <person name="Fraser C.M."/>
            <person name="Venter J.C."/>
            <person name="Davis R.W."/>
        </authorList>
    </citation>
    <scope>NUCLEOTIDE SEQUENCE [LARGE SCALE GENOMIC DNA]</scope>
    <source>
        <strain>cv. Columbia</strain>
    </source>
</reference>
<reference key="4">
    <citation type="journal article" date="2017" name="Plant J.">
        <title>Araport11: a complete reannotation of the Arabidopsis thaliana reference genome.</title>
        <authorList>
            <person name="Cheng C.Y."/>
            <person name="Krishnakumar V."/>
            <person name="Chan A.P."/>
            <person name="Thibaud-Nissen F."/>
            <person name="Schobel S."/>
            <person name="Town C.D."/>
        </authorList>
    </citation>
    <scope>GENOME REANNOTATION</scope>
    <source>
        <strain>cv. Columbia</strain>
    </source>
</reference>
<reference key="5">
    <citation type="journal article" date="2003" name="Science">
        <title>Empirical analysis of transcriptional activity in the Arabidopsis genome.</title>
        <authorList>
            <person name="Yamada K."/>
            <person name="Lim J."/>
            <person name="Dale J.M."/>
            <person name="Chen H."/>
            <person name="Shinn P."/>
            <person name="Palm C.J."/>
            <person name="Southwick A.M."/>
            <person name="Wu H.C."/>
            <person name="Kim C.J."/>
            <person name="Nguyen M."/>
            <person name="Pham P.K."/>
            <person name="Cheuk R.F."/>
            <person name="Karlin-Newmann G."/>
            <person name="Liu S.X."/>
            <person name="Lam B."/>
            <person name="Sakano H."/>
            <person name="Wu T."/>
            <person name="Yu G."/>
            <person name="Miranda M."/>
            <person name="Quach H.L."/>
            <person name="Tripp M."/>
            <person name="Chang C.H."/>
            <person name="Lee J.M."/>
            <person name="Toriumi M.J."/>
            <person name="Chan M.M."/>
            <person name="Tang C.C."/>
            <person name="Onodera C.S."/>
            <person name="Deng J.M."/>
            <person name="Akiyama K."/>
            <person name="Ansari Y."/>
            <person name="Arakawa T."/>
            <person name="Banh J."/>
            <person name="Banno F."/>
            <person name="Bowser L."/>
            <person name="Brooks S.Y."/>
            <person name="Carninci P."/>
            <person name="Chao Q."/>
            <person name="Choy N."/>
            <person name="Enju A."/>
            <person name="Goldsmith A.D."/>
            <person name="Gurjal M."/>
            <person name="Hansen N.F."/>
            <person name="Hayashizaki Y."/>
            <person name="Johnson-Hopson C."/>
            <person name="Hsuan V.W."/>
            <person name="Iida K."/>
            <person name="Karnes M."/>
            <person name="Khan S."/>
            <person name="Koesema E."/>
            <person name="Ishida J."/>
            <person name="Jiang P.X."/>
            <person name="Jones T."/>
            <person name="Kawai J."/>
            <person name="Kamiya A."/>
            <person name="Meyers C."/>
            <person name="Nakajima M."/>
            <person name="Narusaka M."/>
            <person name="Seki M."/>
            <person name="Sakurai T."/>
            <person name="Satou M."/>
            <person name="Tamse R."/>
            <person name="Vaysberg M."/>
            <person name="Wallender E.K."/>
            <person name="Wong C."/>
            <person name="Yamamura Y."/>
            <person name="Yuan S."/>
            <person name="Shinozaki K."/>
            <person name="Davis R.W."/>
            <person name="Theologis A."/>
            <person name="Ecker J.R."/>
        </authorList>
    </citation>
    <scope>NUCLEOTIDE SEQUENCE [LARGE SCALE MRNA]</scope>
    <source>
        <strain>cv. Columbia</strain>
    </source>
</reference>
<reference key="6">
    <citation type="submission" date="2002-03" db="EMBL/GenBank/DDBJ databases">
        <title>Full-length cDNA from Arabidopsis thaliana.</title>
        <authorList>
            <person name="Brover V.V."/>
            <person name="Troukhan M.E."/>
            <person name="Alexandrov N.A."/>
            <person name="Lu Y.-P."/>
            <person name="Flavell R.B."/>
            <person name="Feldmann K.A."/>
        </authorList>
    </citation>
    <scope>NUCLEOTIDE SEQUENCE [LARGE SCALE MRNA]</scope>
</reference>
<name>CH10_ARATH</name>
<comment type="function">
    <text evidence="4">Seems to function only as a co-chaperone, along with CPN60, and in certain cases is essential for the discharge of biologically active proteins from CPN60.</text>
</comment>
<comment type="subunit">
    <text evidence="4">Forms stable complexes with CPN60 in the presence of ATP.</text>
</comment>
<comment type="subcellular location">
    <subcellularLocation>
        <location evidence="2">Mitochondrion</location>
    </subcellularLocation>
</comment>
<comment type="induction">
    <text evidence="2">By heat shock treatment.</text>
</comment>
<comment type="similarity">
    <text evidence="3">Belongs to the GroES chaperonin family.</text>
</comment>
<evidence type="ECO:0000255" key="1"/>
<evidence type="ECO:0000269" key="2">
    <source>
    </source>
</evidence>
<evidence type="ECO:0000305" key="3"/>
<evidence type="ECO:0000305" key="4">
    <source>
    </source>
</evidence>
<sequence>MMKRLIPTFNRILVQRVIQPAKTESGILLPEKSSKLNSGKVIAVGPGSRDKDGKLIPVSVKEGDTVLLPEYGGTQVKLGENEYHLFRDEDVLGTLHED</sequence>
<organism>
    <name type="scientific">Arabidopsis thaliana</name>
    <name type="common">Mouse-ear cress</name>
    <dbReference type="NCBI Taxonomy" id="3702"/>
    <lineage>
        <taxon>Eukaryota</taxon>
        <taxon>Viridiplantae</taxon>
        <taxon>Streptophyta</taxon>
        <taxon>Embryophyta</taxon>
        <taxon>Tracheophyta</taxon>
        <taxon>Spermatophyta</taxon>
        <taxon>Magnoliopsida</taxon>
        <taxon>eudicotyledons</taxon>
        <taxon>Gunneridae</taxon>
        <taxon>Pentapetalae</taxon>
        <taxon>rosids</taxon>
        <taxon>malvids</taxon>
        <taxon>Brassicales</taxon>
        <taxon>Brassicaceae</taxon>
        <taxon>Camelineae</taxon>
        <taxon>Arabidopsis</taxon>
    </lineage>
</organism>
<protein>
    <recommendedName>
        <fullName>10 kDa chaperonin, mitochondrial</fullName>
    </recommendedName>
    <alternativeName>
        <fullName>Chaperonin 10</fullName>
        <shortName>CPN10</shortName>
    </alternativeName>
    <alternativeName>
        <fullName>Protein groES</fullName>
    </alternativeName>
</protein>
<accession>P34893</accession>
<accession>Q96249</accession>
<gene>
    <name type="primary">CPN10</name>
    <name type="ordered locus">At1g14980</name>
    <name type="ORF">T15D22.2</name>
</gene>
<proteinExistence type="evidence at protein level"/>
<keyword id="KW-0143">Chaperone</keyword>
<keyword id="KW-0496">Mitochondrion</keyword>
<keyword id="KW-1185">Reference proteome</keyword>
<keyword id="KW-0809">Transit peptide</keyword>
<dbReference type="EMBL" id="L02843">
    <property type="protein sequence ID" value="AAA32767.1"/>
    <property type="molecule type" value="mRNA"/>
</dbReference>
<dbReference type="EMBL" id="D88314">
    <property type="protein sequence ID" value="BAA13588.2"/>
    <property type="molecule type" value="mRNA"/>
</dbReference>
<dbReference type="EMBL" id="AC012189">
    <property type="protein sequence ID" value="AAF31020.1"/>
    <property type="molecule type" value="Genomic_DNA"/>
</dbReference>
<dbReference type="EMBL" id="CP002684">
    <property type="protein sequence ID" value="AEE29249.1"/>
    <property type="molecule type" value="Genomic_DNA"/>
</dbReference>
<dbReference type="EMBL" id="AY063928">
    <property type="protein sequence ID" value="AAL36284.1"/>
    <property type="molecule type" value="mRNA"/>
</dbReference>
<dbReference type="EMBL" id="AY091252">
    <property type="protein sequence ID" value="AAM14191.1"/>
    <property type="molecule type" value="mRNA"/>
</dbReference>
<dbReference type="EMBL" id="AY086708">
    <property type="protein sequence ID" value="AAM63762.1"/>
    <property type="molecule type" value="mRNA"/>
</dbReference>
<dbReference type="PIR" id="S65597">
    <property type="entry name" value="S65597"/>
</dbReference>
<dbReference type="RefSeq" id="NP_563961.1">
    <property type="nucleotide sequence ID" value="NM_101367.3"/>
</dbReference>
<dbReference type="SMR" id="P34893"/>
<dbReference type="BioGRID" id="23303">
    <property type="interactions" value="1"/>
</dbReference>
<dbReference type="FunCoup" id="P34893">
    <property type="interactions" value="2423"/>
</dbReference>
<dbReference type="STRING" id="3702.P34893"/>
<dbReference type="iPTMnet" id="P34893"/>
<dbReference type="PaxDb" id="3702-AT1G14980.1"/>
<dbReference type="ProteomicsDB" id="224485"/>
<dbReference type="EnsemblPlants" id="AT1G14980.1">
    <property type="protein sequence ID" value="AT1G14980.1"/>
    <property type="gene ID" value="AT1G14980"/>
</dbReference>
<dbReference type="GeneID" id="838063"/>
<dbReference type="Gramene" id="AT1G14980.1">
    <property type="protein sequence ID" value="AT1G14980.1"/>
    <property type="gene ID" value="AT1G14980"/>
</dbReference>
<dbReference type="KEGG" id="ath:AT1G14980"/>
<dbReference type="Araport" id="AT1G14980"/>
<dbReference type="TAIR" id="AT1G14980">
    <property type="gene designation" value="CPN10"/>
</dbReference>
<dbReference type="eggNOG" id="KOG1641">
    <property type="taxonomic scope" value="Eukaryota"/>
</dbReference>
<dbReference type="HOGENOM" id="CLU_132825_0_2_1"/>
<dbReference type="InParanoid" id="P34893"/>
<dbReference type="OMA" id="KERPMQG"/>
<dbReference type="OrthoDB" id="184876at2759"/>
<dbReference type="PhylomeDB" id="P34893"/>
<dbReference type="PRO" id="PR:P34893"/>
<dbReference type="Proteomes" id="UP000006548">
    <property type="component" value="Chromosome 1"/>
</dbReference>
<dbReference type="ExpressionAtlas" id="P34893">
    <property type="expression patterns" value="baseline and differential"/>
</dbReference>
<dbReference type="GO" id="GO:0005829">
    <property type="term" value="C:cytosol"/>
    <property type="evidence" value="ECO:0007005"/>
    <property type="project" value="TAIR"/>
</dbReference>
<dbReference type="GO" id="GO:0005576">
    <property type="term" value="C:extracellular region"/>
    <property type="evidence" value="ECO:0007005"/>
    <property type="project" value="TAIR"/>
</dbReference>
<dbReference type="GO" id="GO:0005739">
    <property type="term" value="C:mitochondrion"/>
    <property type="evidence" value="ECO:0000314"/>
    <property type="project" value="TAIR"/>
</dbReference>
<dbReference type="GO" id="GO:0005524">
    <property type="term" value="F:ATP binding"/>
    <property type="evidence" value="ECO:0007669"/>
    <property type="project" value="InterPro"/>
</dbReference>
<dbReference type="GO" id="GO:0005507">
    <property type="term" value="F:copper ion binding"/>
    <property type="evidence" value="ECO:0007005"/>
    <property type="project" value="TAIR"/>
</dbReference>
<dbReference type="GO" id="GO:0044183">
    <property type="term" value="F:protein folding chaperone"/>
    <property type="evidence" value="ECO:0007669"/>
    <property type="project" value="InterPro"/>
</dbReference>
<dbReference type="GO" id="GO:0009408">
    <property type="term" value="P:response to heat"/>
    <property type="evidence" value="ECO:0000270"/>
    <property type="project" value="TAIR"/>
</dbReference>
<dbReference type="CDD" id="cd00320">
    <property type="entry name" value="cpn10"/>
    <property type="match status" value="1"/>
</dbReference>
<dbReference type="FunFam" id="2.30.33.40:FF:000002">
    <property type="entry name" value="10 kDa chaperonin, mitochondrial"/>
    <property type="match status" value="1"/>
</dbReference>
<dbReference type="Gene3D" id="2.30.33.40">
    <property type="entry name" value="GroES chaperonin"/>
    <property type="match status" value="1"/>
</dbReference>
<dbReference type="InterPro" id="IPR020818">
    <property type="entry name" value="Chaperonin_GroES"/>
</dbReference>
<dbReference type="InterPro" id="IPR037124">
    <property type="entry name" value="Chaperonin_GroES_sf"/>
</dbReference>
<dbReference type="InterPro" id="IPR018369">
    <property type="entry name" value="Chaprnonin_Cpn10_CS"/>
</dbReference>
<dbReference type="InterPro" id="IPR011032">
    <property type="entry name" value="GroES-like_sf"/>
</dbReference>
<dbReference type="PANTHER" id="PTHR10772">
    <property type="entry name" value="10 KDA HEAT SHOCK PROTEIN"/>
    <property type="match status" value="1"/>
</dbReference>
<dbReference type="PANTHER" id="PTHR10772:SF0">
    <property type="entry name" value="10 KDA HEAT SHOCK PROTEIN, MITOCHONDRIAL"/>
    <property type="match status" value="1"/>
</dbReference>
<dbReference type="Pfam" id="PF00166">
    <property type="entry name" value="Cpn10"/>
    <property type="match status" value="1"/>
</dbReference>
<dbReference type="PRINTS" id="PR00297">
    <property type="entry name" value="CHAPERONIN10"/>
</dbReference>
<dbReference type="SMART" id="SM00883">
    <property type="entry name" value="Cpn10"/>
    <property type="match status" value="1"/>
</dbReference>
<dbReference type="SUPFAM" id="SSF50129">
    <property type="entry name" value="GroES-like"/>
    <property type="match status" value="1"/>
</dbReference>
<dbReference type="PROSITE" id="PS00681">
    <property type="entry name" value="CHAPERONINS_CPN10"/>
    <property type="match status" value="1"/>
</dbReference>